<proteinExistence type="inferred from homology"/>
<dbReference type="EC" id="2.4.2.9" evidence="1"/>
<dbReference type="EMBL" id="CP001616">
    <property type="protein sequence ID" value="ACQ92545.1"/>
    <property type="molecule type" value="Genomic_DNA"/>
</dbReference>
<dbReference type="RefSeq" id="WP_012729144.1">
    <property type="nucleotide sequence ID" value="NC_012691.1"/>
</dbReference>
<dbReference type="SMR" id="C4LC66"/>
<dbReference type="STRING" id="595494.Tola_0917"/>
<dbReference type="KEGG" id="tau:Tola_0917"/>
<dbReference type="eggNOG" id="COG0035">
    <property type="taxonomic scope" value="Bacteria"/>
</dbReference>
<dbReference type="HOGENOM" id="CLU_067096_2_2_6"/>
<dbReference type="OrthoDB" id="9781675at2"/>
<dbReference type="UniPathway" id="UPA00574">
    <property type="reaction ID" value="UER00636"/>
</dbReference>
<dbReference type="Proteomes" id="UP000009073">
    <property type="component" value="Chromosome"/>
</dbReference>
<dbReference type="GO" id="GO:0005525">
    <property type="term" value="F:GTP binding"/>
    <property type="evidence" value="ECO:0007669"/>
    <property type="project" value="UniProtKB-KW"/>
</dbReference>
<dbReference type="GO" id="GO:0000287">
    <property type="term" value="F:magnesium ion binding"/>
    <property type="evidence" value="ECO:0007669"/>
    <property type="project" value="UniProtKB-UniRule"/>
</dbReference>
<dbReference type="GO" id="GO:0004845">
    <property type="term" value="F:uracil phosphoribosyltransferase activity"/>
    <property type="evidence" value="ECO:0007669"/>
    <property type="project" value="UniProtKB-UniRule"/>
</dbReference>
<dbReference type="GO" id="GO:0044206">
    <property type="term" value="P:UMP salvage"/>
    <property type="evidence" value="ECO:0007669"/>
    <property type="project" value="UniProtKB-UniRule"/>
</dbReference>
<dbReference type="GO" id="GO:0006223">
    <property type="term" value="P:uracil salvage"/>
    <property type="evidence" value="ECO:0007669"/>
    <property type="project" value="InterPro"/>
</dbReference>
<dbReference type="CDD" id="cd06223">
    <property type="entry name" value="PRTases_typeI"/>
    <property type="match status" value="1"/>
</dbReference>
<dbReference type="FunFam" id="3.40.50.2020:FF:000003">
    <property type="entry name" value="Uracil phosphoribosyltransferase"/>
    <property type="match status" value="1"/>
</dbReference>
<dbReference type="Gene3D" id="3.40.50.2020">
    <property type="match status" value="1"/>
</dbReference>
<dbReference type="HAMAP" id="MF_01218_B">
    <property type="entry name" value="Upp_B"/>
    <property type="match status" value="1"/>
</dbReference>
<dbReference type="InterPro" id="IPR000836">
    <property type="entry name" value="PRibTrfase_dom"/>
</dbReference>
<dbReference type="InterPro" id="IPR029057">
    <property type="entry name" value="PRTase-like"/>
</dbReference>
<dbReference type="InterPro" id="IPR034332">
    <property type="entry name" value="Upp_B"/>
</dbReference>
<dbReference type="InterPro" id="IPR050054">
    <property type="entry name" value="UPRTase/APRTase"/>
</dbReference>
<dbReference type="InterPro" id="IPR005765">
    <property type="entry name" value="Ura_phspho_trans"/>
</dbReference>
<dbReference type="NCBIfam" id="NF001097">
    <property type="entry name" value="PRK00129.1"/>
    <property type="match status" value="1"/>
</dbReference>
<dbReference type="NCBIfam" id="TIGR01091">
    <property type="entry name" value="upp"/>
    <property type="match status" value="1"/>
</dbReference>
<dbReference type="PANTHER" id="PTHR32315">
    <property type="entry name" value="ADENINE PHOSPHORIBOSYLTRANSFERASE"/>
    <property type="match status" value="1"/>
</dbReference>
<dbReference type="PANTHER" id="PTHR32315:SF4">
    <property type="entry name" value="URACIL PHOSPHORIBOSYLTRANSFERASE, CHLOROPLASTIC"/>
    <property type="match status" value="1"/>
</dbReference>
<dbReference type="Pfam" id="PF14681">
    <property type="entry name" value="UPRTase"/>
    <property type="match status" value="1"/>
</dbReference>
<dbReference type="SUPFAM" id="SSF53271">
    <property type="entry name" value="PRTase-like"/>
    <property type="match status" value="1"/>
</dbReference>
<reference key="1">
    <citation type="submission" date="2009-05" db="EMBL/GenBank/DDBJ databases">
        <title>Complete sequence of Tolumonas auensis DSM 9187.</title>
        <authorList>
            <consortium name="US DOE Joint Genome Institute"/>
            <person name="Lucas S."/>
            <person name="Copeland A."/>
            <person name="Lapidus A."/>
            <person name="Glavina del Rio T."/>
            <person name="Tice H."/>
            <person name="Bruce D."/>
            <person name="Goodwin L."/>
            <person name="Pitluck S."/>
            <person name="Chertkov O."/>
            <person name="Brettin T."/>
            <person name="Detter J.C."/>
            <person name="Han C."/>
            <person name="Larimer F."/>
            <person name="Land M."/>
            <person name="Hauser L."/>
            <person name="Kyrpides N."/>
            <person name="Mikhailova N."/>
            <person name="Spring S."/>
            <person name="Beller H."/>
        </authorList>
    </citation>
    <scope>NUCLEOTIDE SEQUENCE [LARGE SCALE GENOMIC DNA]</scope>
    <source>
        <strain>DSM 9187 / NBRC 110442 / TA 4</strain>
    </source>
</reference>
<feature type="chain" id="PRO_1000213947" description="Uracil phosphoribosyltransferase">
    <location>
        <begin position="1"/>
        <end position="208"/>
    </location>
</feature>
<feature type="binding site" evidence="1">
    <location>
        <position position="78"/>
    </location>
    <ligand>
        <name>5-phospho-alpha-D-ribose 1-diphosphate</name>
        <dbReference type="ChEBI" id="CHEBI:58017"/>
    </ligand>
</feature>
<feature type="binding site" evidence="1">
    <location>
        <position position="103"/>
    </location>
    <ligand>
        <name>5-phospho-alpha-D-ribose 1-diphosphate</name>
        <dbReference type="ChEBI" id="CHEBI:58017"/>
    </ligand>
</feature>
<feature type="binding site" evidence="1">
    <location>
        <begin position="130"/>
        <end position="138"/>
    </location>
    <ligand>
        <name>5-phospho-alpha-D-ribose 1-diphosphate</name>
        <dbReference type="ChEBI" id="CHEBI:58017"/>
    </ligand>
</feature>
<feature type="binding site" evidence="1">
    <location>
        <position position="193"/>
    </location>
    <ligand>
        <name>uracil</name>
        <dbReference type="ChEBI" id="CHEBI:17568"/>
    </ligand>
</feature>
<feature type="binding site" evidence="1">
    <location>
        <begin position="198"/>
        <end position="200"/>
    </location>
    <ligand>
        <name>uracil</name>
        <dbReference type="ChEBI" id="CHEBI:17568"/>
    </ligand>
</feature>
<feature type="binding site" evidence="1">
    <location>
        <position position="199"/>
    </location>
    <ligand>
        <name>5-phospho-alpha-D-ribose 1-diphosphate</name>
        <dbReference type="ChEBI" id="CHEBI:58017"/>
    </ligand>
</feature>
<evidence type="ECO:0000255" key="1">
    <source>
        <dbReference type="HAMAP-Rule" id="MF_01218"/>
    </source>
</evidence>
<name>UPP_TOLAT</name>
<gene>
    <name evidence="1" type="primary">upp</name>
    <name type="ordered locus">Tola_0917</name>
</gene>
<accession>C4LC66</accession>
<sequence length="208" mass="22640">MKVIEVKHPLVKHKLGLMREADISTKRFRELAKEVGSLLTYEATSDFETEKVTIDGWNGPVEVDQIKGKKVTVVPILRAGLGMMDGVLEHMPSARVSVVGIYRDEETLQPVPYFQKIVSNIDERLALIVDPMLATGGSMIATIDLLKQKGCKQIKVIVLVAAPEGLAALQAAHDDVEVYCASIDQGLNEKGYIIPGLGDAGDKIFGTK</sequence>
<organism>
    <name type="scientific">Tolumonas auensis (strain DSM 9187 / NBRC 110442 / TA 4)</name>
    <dbReference type="NCBI Taxonomy" id="595494"/>
    <lineage>
        <taxon>Bacteria</taxon>
        <taxon>Pseudomonadati</taxon>
        <taxon>Pseudomonadota</taxon>
        <taxon>Gammaproteobacteria</taxon>
        <taxon>Aeromonadales</taxon>
        <taxon>Aeromonadaceae</taxon>
        <taxon>Tolumonas</taxon>
    </lineage>
</organism>
<comment type="function">
    <text evidence="1">Catalyzes the conversion of uracil and 5-phospho-alpha-D-ribose 1-diphosphate (PRPP) to UMP and diphosphate.</text>
</comment>
<comment type="catalytic activity">
    <reaction evidence="1">
        <text>UMP + diphosphate = 5-phospho-alpha-D-ribose 1-diphosphate + uracil</text>
        <dbReference type="Rhea" id="RHEA:13017"/>
        <dbReference type="ChEBI" id="CHEBI:17568"/>
        <dbReference type="ChEBI" id="CHEBI:33019"/>
        <dbReference type="ChEBI" id="CHEBI:57865"/>
        <dbReference type="ChEBI" id="CHEBI:58017"/>
        <dbReference type="EC" id="2.4.2.9"/>
    </reaction>
</comment>
<comment type="cofactor">
    <cofactor evidence="1">
        <name>Mg(2+)</name>
        <dbReference type="ChEBI" id="CHEBI:18420"/>
    </cofactor>
    <text evidence="1">Binds 1 Mg(2+) ion per subunit. The magnesium is bound as Mg-PRPP.</text>
</comment>
<comment type="activity regulation">
    <text evidence="1">Allosterically activated by GTP.</text>
</comment>
<comment type="pathway">
    <text evidence="1">Pyrimidine metabolism; UMP biosynthesis via salvage pathway; UMP from uracil: step 1/1.</text>
</comment>
<comment type="similarity">
    <text evidence="1">Belongs to the UPRTase family.</text>
</comment>
<keyword id="KW-0021">Allosteric enzyme</keyword>
<keyword id="KW-0328">Glycosyltransferase</keyword>
<keyword id="KW-0342">GTP-binding</keyword>
<keyword id="KW-0460">Magnesium</keyword>
<keyword id="KW-0547">Nucleotide-binding</keyword>
<keyword id="KW-1185">Reference proteome</keyword>
<keyword id="KW-0808">Transferase</keyword>
<protein>
    <recommendedName>
        <fullName evidence="1">Uracil phosphoribosyltransferase</fullName>
        <ecNumber evidence="1">2.4.2.9</ecNumber>
    </recommendedName>
    <alternativeName>
        <fullName evidence="1">UMP pyrophosphorylase</fullName>
    </alternativeName>
    <alternativeName>
        <fullName evidence="1">UPRTase</fullName>
    </alternativeName>
</protein>